<comment type="function">
    <text evidence="2 3 4 5 7 13">Peroxisomal trifunctional enzyme possessing 2-enoyl-CoA hydratase, 3-hydroxyacyl-CoA dehydrogenase, and delta 3, delta 2-enoyl-CoA isomerase activities (PubMed:12106015, PubMed:2303409, PubMed:23351063). Catalyzes two of the four reactions of the long chain fatty acids peroxisomal beta-oxidation pathway (PubMed:12106015, PubMed:2303409). Can also use branched-chain fatty acids such as 2-methyl-2E-butenoyl-CoA as a substrate, which is hydrated into (2S,3S)-3-hydroxy-2-methylbutanoyl-CoA (Probable). Optimal isomerase for 2,5 double bonds into 3,5 form isomerization in a range of enoyl-CoA species. Also able to isomerize both 3-cis and 3-trans double bonds into the 2-trans form in a range of enoyl-CoA species (PubMed:11781327). Regulates the amount of medium-chain dicarboxylic fatty acids which are essential regulators of all fatty acid oxidation pathways (By similarity). Also involved in the degradation of long-chain dicarboxylic acids through peroxisomal beta-oxidation (By similarity).</text>
</comment>
<comment type="catalytic activity">
    <reaction evidence="12">
        <text>a (3S)-3-hydroxyacyl-CoA = a (2E)-enoyl-CoA + H2O</text>
        <dbReference type="Rhea" id="RHEA:16105"/>
        <dbReference type="ChEBI" id="CHEBI:15377"/>
        <dbReference type="ChEBI" id="CHEBI:57318"/>
        <dbReference type="ChEBI" id="CHEBI:58856"/>
        <dbReference type="EC" id="4.2.1.17"/>
    </reaction>
    <physiologicalReaction direction="left-to-right" evidence="12">
        <dbReference type="Rhea" id="RHEA:16106"/>
    </physiologicalReaction>
</comment>
<comment type="catalytic activity">
    <reaction evidence="12">
        <text>a 4-saturated-(3S)-3-hydroxyacyl-CoA = a (3E)-enoyl-CoA + H2O</text>
        <dbReference type="Rhea" id="RHEA:20724"/>
        <dbReference type="ChEBI" id="CHEBI:15377"/>
        <dbReference type="ChEBI" id="CHEBI:58521"/>
        <dbReference type="ChEBI" id="CHEBI:137480"/>
        <dbReference type="EC" id="4.2.1.17"/>
    </reaction>
    <physiologicalReaction direction="left-to-right" evidence="12">
        <dbReference type="Rhea" id="RHEA:20725"/>
    </physiologicalReaction>
</comment>
<comment type="catalytic activity">
    <reaction evidence="10">
        <text>a (3Z)-enoyl-CoA = a 4-saturated (2E)-enoyl-CoA</text>
        <dbReference type="Rhea" id="RHEA:45900"/>
        <dbReference type="ChEBI" id="CHEBI:85097"/>
        <dbReference type="ChEBI" id="CHEBI:85489"/>
        <dbReference type="EC" id="5.3.3.8"/>
    </reaction>
    <physiologicalReaction direction="left-to-right" evidence="10">
        <dbReference type="Rhea" id="RHEA:45901"/>
    </physiologicalReaction>
</comment>
<comment type="catalytic activity">
    <reaction evidence="10">
        <text>a (3E)-enoyl-CoA = a 4-saturated (2E)-enoyl-CoA</text>
        <dbReference type="Rhea" id="RHEA:45228"/>
        <dbReference type="ChEBI" id="CHEBI:58521"/>
        <dbReference type="ChEBI" id="CHEBI:85097"/>
        <dbReference type="EC" id="5.3.3.8"/>
    </reaction>
    <physiologicalReaction direction="left-to-right" evidence="10">
        <dbReference type="Rhea" id="RHEA:45229"/>
    </physiologicalReaction>
</comment>
<comment type="catalytic activity">
    <reaction evidence="2">
        <text>a (3S)-3-hydroxyacyl-CoA + NAD(+) = a 3-oxoacyl-CoA + NADH + H(+)</text>
        <dbReference type="Rhea" id="RHEA:22432"/>
        <dbReference type="ChEBI" id="CHEBI:15378"/>
        <dbReference type="ChEBI" id="CHEBI:57318"/>
        <dbReference type="ChEBI" id="CHEBI:57540"/>
        <dbReference type="ChEBI" id="CHEBI:57945"/>
        <dbReference type="ChEBI" id="CHEBI:90726"/>
        <dbReference type="EC" id="1.1.1.35"/>
    </reaction>
    <physiologicalReaction direction="left-to-right" evidence="2">
        <dbReference type="Rhea" id="RHEA:22433"/>
    </physiologicalReaction>
</comment>
<comment type="catalytic activity">
    <reaction evidence="13">
        <text>(2S,3S)-3-hydroxy-2-methylbutanoyl-CoA = (2E)-2-methylbut-2-enoyl-CoA + H2O</text>
        <dbReference type="Rhea" id="RHEA:31119"/>
        <dbReference type="ChEBI" id="CHEBI:15377"/>
        <dbReference type="ChEBI" id="CHEBI:57312"/>
        <dbReference type="ChEBI" id="CHEBI:57337"/>
    </reaction>
    <physiologicalReaction direction="right-to-left" evidence="13">
        <dbReference type="Rhea" id="RHEA:31121"/>
    </physiologicalReaction>
</comment>
<comment type="catalytic activity">
    <reaction evidence="4">
        <text>(3E,5Z)-tetradecadienoyl-CoA = (2E,5Z)-tetradecadienoyl-CoA</text>
        <dbReference type="Rhea" id="RHEA:47464"/>
        <dbReference type="ChEBI" id="CHEBI:71586"/>
        <dbReference type="ChEBI" id="CHEBI:87701"/>
    </reaction>
    <physiologicalReaction direction="right-to-left" evidence="4">
        <dbReference type="Rhea" id="RHEA:47466"/>
    </physiologicalReaction>
</comment>
<comment type="catalytic activity">
    <reaction evidence="4">
        <text>(3E,5Z)-octadienoyl-CoA = (2E,5Z)-octadienoyl-CoA</text>
        <dbReference type="Rhea" id="RHEA:49932"/>
        <dbReference type="ChEBI" id="CHEBI:85108"/>
        <dbReference type="ChEBI" id="CHEBI:131990"/>
    </reaction>
    <physiologicalReaction direction="right-to-left" evidence="4">
        <dbReference type="Rhea" id="RHEA:49934"/>
    </physiologicalReaction>
</comment>
<comment type="catalytic activity">
    <reaction evidence="7">
        <text>(3S)-hydroxydecanoyl-CoA + NAD(+) = 3-oxodecanoyl-CoA + NADH + H(+)</text>
        <dbReference type="Rhea" id="RHEA:31187"/>
        <dbReference type="ChEBI" id="CHEBI:15378"/>
        <dbReference type="ChEBI" id="CHEBI:57540"/>
        <dbReference type="ChEBI" id="CHEBI:57945"/>
        <dbReference type="ChEBI" id="CHEBI:62548"/>
        <dbReference type="ChEBI" id="CHEBI:62616"/>
    </reaction>
    <physiologicalReaction direction="left-to-right" evidence="12">
        <dbReference type="Rhea" id="RHEA:31188"/>
    </physiologicalReaction>
</comment>
<comment type="catalytic activity">
    <reaction evidence="7">
        <text>(3E)-decenoyl-CoA = (2E)-decenoyl-CoA</text>
        <dbReference type="Rhea" id="RHEA:45752"/>
        <dbReference type="ChEBI" id="CHEBI:61406"/>
        <dbReference type="ChEBI" id="CHEBI:84793"/>
    </reaction>
    <physiologicalReaction direction="left-to-right" evidence="12">
        <dbReference type="Rhea" id="RHEA:45753"/>
    </physiologicalReaction>
</comment>
<comment type="catalytic activity">
    <reaction evidence="7">
        <text>(3Z)-hexenoyl-CoA = (2E)-hexenoyl-CoA</text>
        <dbReference type="Rhea" id="RHEA:45748"/>
        <dbReference type="ChEBI" id="CHEBI:62077"/>
        <dbReference type="ChEBI" id="CHEBI:85415"/>
    </reaction>
    <physiologicalReaction direction="left-to-right" evidence="12">
        <dbReference type="Rhea" id="RHEA:45749"/>
    </physiologicalReaction>
</comment>
<comment type="catalytic activity">
    <reaction evidence="5 7">
        <text>(3E)-hexenoyl-CoA = (2E)-hexenoyl-CoA</text>
        <dbReference type="Rhea" id="RHEA:45736"/>
        <dbReference type="ChEBI" id="CHEBI:62077"/>
        <dbReference type="ChEBI" id="CHEBI:84790"/>
    </reaction>
    <physiologicalReaction direction="left-to-right" evidence="11 12">
        <dbReference type="Rhea" id="RHEA:45737"/>
    </physiologicalReaction>
</comment>
<comment type="catalytic activity">
    <reaction evidence="5 7">
        <text>(3S)-hydroxydecanoyl-CoA = (2E)-decenoyl-CoA + H2O</text>
        <dbReference type="Rhea" id="RHEA:31191"/>
        <dbReference type="ChEBI" id="CHEBI:15377"/>
        <dbReference type="ChEBI" id="CHEBI:61406"/>
        <dbReference type="ChEBI" id="CHEBI:62616"/>
    </reaction>
    <physiologicalReaction direction="right-to-left" evidence="11 12">
        <dbReference type="Rhea" id="RHEA:31193"/>
    </physiologicalReaction>
</comment>
<comment type="catalytic activity">
    <reaction evidence="5">
        <text>(3S)-hydroxyhexanoyl-CoA = (2E)-hexenoyl-CoA + H2O</text>
        <dbReference type="Rhea" id="RHEA:30547"/>
        <dbReference type="ChEBI" id="CHEBI:15377"/>
        <dbReference type="ChEBI" id="CHEBI:62075"/>
        <dbReference type="ChEBI" id="CHEBI:62077"/>
    </reaction>
    <physiologicalReaction direction="right-to-left" evidence="11">
        <dbReference type="Rhea" id="RHEA:30549"/>
    </physiologicalReaction>
</comment>
<comment type="catalytic activity">
    <reaction evidence="2">
        <text>(3S)-hydroxyhexadecanoyl-CoA + NAD(+) = 3-oxohexadecanoyl-CoA + NADH + H(+)</text>
        <dbReference type="Rhea" id="RHEA:31159"/>
        <dbReference type="ChEBI" id="CHEBI:15378"/>
        <dbReference type="ChEBI" id="CHEBI:57349"/>
        <dbReference type="ChEBI" id="CHEBI:57540"/>
        <dbReference type="ChEBI" id="CHEBI:57945"/>
        <dbReference type="ChEBI" id="CHEBI:62613"/>
    </reaction>
    <physiologicalReaction direction="left-to-right" evidence="2">
        <dbReference type="Rhea" id="RHEA:31160"/>
    </physiologicalReaction>
</comment>
<comment type="catalytic activity">
    <reaction evidence="2">
        <text>(3S)-hydroxyhexadecanoyl-CoA = (2E)-hexadecenoyl-CoA + H2O</text>
        <dbReference type="Rhea" id="RHEA:31163"/>
        <dbReference type="ChEBI" id="CHEBI:15377"/>
        <dbReference type="ChEBI" id="CHEBI:61526"/>
        <dbReference type="ChEBI" id="CHEBI:62613"/>
    </reaction>
    <physiologicalReaction direction="right-to-left" evidence="2">
        <dbReference type="Rhea" id="RHEA:31165"/>
    </physiologicalReaction>
</comment>
<comment type="catalytic activity">
    <reaction evidence="2">
        <text>(2E)-hexadecenedioyl-CoA + H2O = (3S)-hydroxyhexadecanedioyl-CoA</text>
        <dbReference type="Rhea" id="RHEA:40259"/>
        <dbReference type="ChEBI" id="CHEBI:15377"/>
        <dbReference type="ChEBI" id="CHEBI:77075"/>
        <dbReference type="ChEBI" id="CHEBI:77080"/>
    </reaction>
    <physiologicalReaction direction="left-to-right" evidence="2">
        <dbReference type="Rhea" id="RHEA:40260"/>
    </physiologicalReaction>
</comment>
<comment type="catalytic activity">
    <reaction evidence="2">
        <text>(3S)-hydroxyhexadecanedioyl-CoA + NAD(+) = 3-oxohexadecanedioyl-CoA + NADH + H(+)</text>
        <dbReference type="Rhea" id="RHEA:40267"/>
        <dbReference type="ChEBI" id="CHEBI:15378"/>
        <dbReference type="ChEBI" id="CHEBI:57540"/>
        <dbReference type="ChEBI" id="CHEBI:57945"/>
        <dbReference type="ChEBI" id="CHEBI:77080"/>
        <dbReference type="ChEBI" id="CHEBI:77081"/>
    </reaction>
    <physiologicalReaction direction="left-to-right" evidence="2">
        <dbReference type="Rhea" id="RHEA:40268"/>
    </physiologicalReaction>
</comment>
<comment type="activity regulation">
    <text evidence="1">Enzyme activity enhanced by acetylation.</text>
</comment>
<comment type="pathway">
    <text evidence="4 5 7">Lipid metabolism; fatty acid beta-oxidation.</text>
</comment>
<comment type="subunit">
    <text evidence="6">Monomer.</text>
</comment>
<comment type="subcellular location">
    <subcellularLocation>
        <location evidence="4">Peroxisome</location>
    </subcellularLocation>
</comment>
<comment type="PTM">
    <text evidence="2">Acetylated, leading to enhanced enzyme activity. Acetylation is enhanced by up to 80% after treatment either with trichostin A (TCA) or with nicotinamide (NAM) with highest increase on Lys-345. Acetylation and enzyme activity increased by about 1.5% on addition of fatty acids (By similarity).</text>
</comment>
<comment type="similarity">
    <text evidence="11">In the N-terminal section; belongs to the enoyl-CoA hydratase/isomerase family.</text>
</comment>
<comment type="similarity">
    <text evidence="11">In the C-terminal section; belongs to the 3-hydroxyacyl-CoA dehydrogenase family.</text>
</comment>
<proteinExistence type="evidence at protein level"/>
<feature type="chain" id="PRO_0000109249" description="Peroxisomal bifunctional enzyme">
    <location>
        <begin position="1"/>
        <end position="722"/>
    </location>
</feature>
<feature type="region of interest" description="Enoyl-CoA hydratase / isomerase">
    <location>
        <begin position="1"/>
        <end position="281"/>
    </location>
</feature>
<feature type="region of interest" description="3-hydroxyacyl-CoA dehydrogenase">
    <location>
        <begin position="282"/>
        <end position="571"/>
    </location>
</feature>
<feature type="short sequence motif" description="Microbody targeting signal">
    <location>
        <begin position="720"/>
        <end position="722"/>
    </location>
</feature>
<feature type="binding site" evidence="1">
    <location>
        <position position="100"/>
    </location>
    <ligand>
        <name>substrate</name>
    </ligand>
</feature>
<feature type="site" description="Important for catalytic activity" evidence="1">
    <location>
        <position position="103"/>
    </location>
</feature>
<feature type="site" description="Important for catalytic activity" evidence="1">
    <location>
        <position position="123"/>
    </location>
</feature>
<feature type="modified residue" description="Blocked amino end (Ala)">
    <location>
        <position position="2"/>
    </location>
</feature>
<feature type="modified residue" description="N6-succinyllysine" evidence="3">
    <location>
        <position position="38"/>
    </location>
</feature>
<feature type="modified residue" description="N6-acetyllysine; alternate" evidence="3">
    <location>
        <position position="173"/>
    </location>
</feature>
<feature type="modified residue" description="N6-succinyllysine; alternate" evidence="3">
    <location>
        <position position="173"/>
    </location>
</feature>
<feature type="modified residue" description="N6-succinyllysine" evidence="3">
    <location>
        <position position="182"/>
    </location>
</feature>
<feature type="modified residue" description="N6-acetyllysine; alternate" evidence="3">
    <location>
        <position position="190"/>
    </location>
</feature>
<feature type="modified residue" description="N6-succinyllysine; alternate" evidence="3">
    <location>
        <position position="190"/>
    </location>
</feature>
<feature type="modified residue" description="N6-acetyllysine; alternate" evidence="3">
    <location>
        <position position="218"/>
    </location>
</feature>
<feature type="modified residue" description="N6-succinyllysine; alternate" evidence="3">
    <location>
        <position position="218"/>
    </location>
</feature>
<feature type="modified residue" description="N6-succinyllysine" evidence="3">
    <location>
        <position position="241"/>
    </location>
</feature>
<feature type="modified residue" description="N6-acetyllysine" evidence="3">
    <location>
        <position position="249"/>
    </location>
</feature>
<feature type="modified residue" description="N6-succinyllysine" evidence="3">
    <location>
        <position position="253"/>
    </location>
</feature>
<feature type="modified residue" description="N6-acetyllysine; alternate" evidence="3">
    <location>
        <position position="275"/>
    </location>
</feature>
<feature type="modified residue" description="N6-succinyllysine; alternate" evidence="3">
    <location>
        <position position="275"/>
    </location>
</feature>
<feature type="modified residue" description="N6-succinyllysine" evidence="3">
    <location>
        <position position="279"/>
    </location>
</feature>
<feature type="modified residue" description="N6-succinyllysine" evidence="3">
    <location>
        <position position="289"/>
    </location>
</feature>
<feature type="modified residue" description="N6-succinyllysine" evidence="3">
    <location>
        <position position="330"/>
    </location>
</feature>
<feature type="modified residue" description="N6-acetyllysine" evidence="2">
    <location>
        <position position="345"/>
    </location>
</feature>
<feature type="modified residue" description="N6-acetyllysine" evidence="3">
    <location>
        <position position="359"/>
    </location>
</feature>
<feature type="modified residue" description="N6-acetyllysine" evidence="3">
    <location>
        <position position="463"/>
    </location>
</feature>
<feature type="modified residue" description="N6-succinyllysine" evidence="3">
    <location>
        <position position="531"/>
    </location>
</feature>
<feature type="modified residue" description="Phosphothreonine" evidence="2">
    <location>
        <position position="547"/>
    </location>
</feature>
<feature type="modified residue" description="N6-succinyllysine" evidence="3">
    <location>
        <position position="576"/>
    </location>
</feature>
<feature type="modified residue" description="N6-acetyllysine; alternate" evidence="2">
    <location>
        <position position="583"/>
    </location>
</feature>
<feature type="modified residue" description="N6-succinyllysine; alternate" evidence="3">
    <location>
        <position position="583"/>
    </location>
</feature>
<feature type="modified residue" description="N6-acetyllysine; alternate" evidence="3">
    <location>
        <position position="590"/>
    </location>
</feature>
<feature type="modified residue" description="N6-succinyllysine; alternate" evidence="3">
    <location>
        <position position="590"/>
    </location>
</feature>
<feature type="modified residue" description="N6-acetyllysine; alternate" evidence="3">
    <location>
        <position position="709"/>
    </location>
</feature>
<feature type="modified residue" description="N6-succinyllysine; alternate" evidence="3">
    <location>
        <position position="709"/>
    </location>
</feature>
<feature type="modified residue" description="N6-succinyllysine" evidence="3">
    <location>
        <position position="721"/>
    </location>
</feature>
<feature type="strand" evidence="18">
    <location>
        <begin position="2"/>
        <end position="6"/>
    </location>
</feature>
<feature type="turn" evidence="17">
    <location>
        <begin position="8"/>
        <end position="10"/>
    </location>
</feature>
<feature type="strand" evidence="18">
    <location>
        <begin position="11"/>
        <end position="16"/>
    </location>
</feature>
<feature type="turn" evidence="18">
    <location>
        <begin position="19"/>
        <end position="22"/>
    </location>
</feature>
<feature type="helix" evidence="18">
    <location>
        <begin position="26"/>
        <end position="40"/>
    </location>
</feature>
<feature type="strand" evidence="18">
    <location>
        <begin position="47"/>
        <end position="53"/>
    </location>
</feature>
<feature type="strand" evidence="18">
    <location>
        <begin position="63"/>
        <end position="65"/>
    </location>
</feature>
<feature type="strand" evidence="20">
    <location>
        <begin position="67"/>
        <end position="69"/>
    </location>
</feature>
<feature type="helix" evidence="18">
    <location>
        <begin position="74"/>
        <end position="84"/>
    </location>
</feature>
<feature type="strand" evidence="18">
    <location>
        <begin position="89"/>
        <end position="93"/>
    </location>
</feature>
<feature type="strand" evidence="18">
    <location>
        <begin position="95"/>
        <end position="98"/>
    </location>
</feature>
<feature type="helix" evidence="18">
    <location>
        <begin position="100"/>
        <end position="106"/>
    </location>
</feature>
<feature type="strand" evidence="18">
    <location>
        <begin position="108"/>
        <end position="114"/>
    </location>
</feature>
<feature type="strand" evidence="18">
    <location>
        <begin position="118"/>
        <end position="120"/>
    </location>
</feature>
<feature type="helix" evidence="18">
    <location>
        <begin position="122"/>
        <end position="126"/>
    </location>
</feature>
<feature type="turn" evidence="18">
    <location>
        <begin position="131"/>
        <end position="133"/>
    </location>
</feature>
<feature type="helix" evidence="18">
    <location>
        <begin position="134"/>
        <end position="142"/>
    </location>
</feature>
<feature type="helix" evidence="18">
    <location>
        <begin position="144"/>
        <end position="153"/>
    </location>
</feature>
<feature type="strand" evidence="17">
    <location>
        <begin position="156"/>
        <end position="158"/>
    </location>
</feature>
<feature type="helix" evidence="18">
    <location>
        <begin position="159"/>
        <end position="164"/>
    </location>
</feature>
<feature type="strand" evidence="18">
    <location>
        <begin position="169"/>
        <end position="174"/>
    </location>
</feature>
<feature type="helix" evidence="18">
    <location>
        <begin position="176"/>
        <end position="187"/>
    </location>
</feature>
<feature type="strand" evidence="19">
    <location>
        <begin position="188"/>
        <end position="190"/>
    </location>
</feature>
<feature type="helix" evidence="18">
    <location>
        <begin position="193"/>
        <end position="195"/>
    </location>
</feature>
<feature type="helix" evidence="18">
    <location>
        <begin position="197"/>
        <end position="199"/>
    </location>
</feature>
<feature type="helix" evidence="18">
    <location>
        <begin position="208"/>
        <end position="222"/>
    </location>
</feature>
<feature type="helix" evidence="18">
    <location>
        <begin position="227"/>
        <end position="241"/>
    </location>
</feature>
<feature type="helix" evidence="18">
    <location>
        <begin position="244"/>
        <end position="259"/>
    </location>
</feature>
<feature type="helix" evidence="15">
    <location>
        <begin position="262"/>
        <end position="272"/>
    </location>
</feature>
<feature type="helix" evidence="15">
    <location>
        <begin position="273"/>
        <end position="278"/>
    </location>
</feature>
<feature type="turn" evidence="16">
    <location>
        <begin position="283"/>
        <end position="285"/>
    </location>
</feature>
<feature type="turn" evidence="15">
    <location>
        <begin position="288"/>
        <end position="290"/>
    </location>
</feature>
<feature type="strand" evidence="15">
    <location>
        <begin position="298"/>
        <end position="302"/>
    </location>
</feature>
<feature type="helix" evidence="15">
    <location>
        <begin position="306"/>
        <end position="316"/>
    </location>
</feature>
<feature type="turn" evidence="15">
    <location>
        <begin position="317"/>
        <end position="319"/>
    </location>
</feature>
<feature type="strand" evidence="15">
    <location>
        <begin position="321"/>
        <end position="325"/>
    </location>
</feature>
<feature type="helix" evidence="15">
    <location>
        <begin position="329"/>
        <end position="352"/>
    </location>
</feature>
<feature type="strand" evidence="16">
    <location>
        <begin position="353"/>
        <end position="355"/>
    </location>
</feature>
<feature type="strand" evidence="15">
    <location>
        <begin position="362"/>
        <end position="366"/>
    </location>
</feature>
<feature type="helix" evidence="15">
    <location>
        <begin position="368"/>
        <end position="371"/>
    </location>
</feature>
<feature type="strand" evidence="15">
    <location>
        <begin position="375"/>
        <end position="379"/>
    </location>
</feature>
<feature type="helix" evidence="15">
    <location>
        <begin position="385"/>
        <end position="398"/>
    </location>
</feature>
<feature type="strand" evidence="15">
    <location>
        <begin position="404"/>
        <end position="407"/>
    </location>
</feature>
<feature type="strand" evidence="15">
    <location>
        <begin position="410"/>
        <end position="412"/>
    </location>
</feature>
<feature type="helix" evidence="15">
    <location>
        <begin position="414"/>
        <end position="418"/>
    </location>
</feature>
<feature type="helix" evidence="15">
    <location>
        <begin position="424"/>
        <end position="426"/>
    </location>
</feature>
<feature type="strand" evidence="15">
    <location>
        <begin position="427"/>
        <end position="432"/>
    </location>
</feature>
<feature type="turn" evidence="15">
    <location>
        <begin position="436"/>
        <end position="438"/>
    </location>
</feature>
<feature type="strand" evidence="15">
    <location>
        <begin position="441"/>
        <end position="446"/>
    </location>
</feature>
<feature type="helix" evidence="15">
    <location>
        <begin position="452"/>
        <end position="464"/>
    </location>
</feature>
<feature type="strand" evidence="15">
    <location>
        <begin position="468"/>
        <end position="472"/>
    </location>
</feature>
<feature type="turn" evidence="15">
    <location>
        <begin position="476"/>
        <end position="479"/>
    </location>
</feature>
<feature type="helix" evidence="15">
    <location>
        <begin position="480"/>
        <end position="496"/>
    </location>
</feature>
<feature type="helix" evidence="15">
    <location>
        <begin position="501"/>
        <end position="511"/>
    </location>
</feature>
<feature type="helix" evidence="15">
    <location>
        <begin position="517"/>
        <end position="524"/>
    </location>
</feature>
<feature type="helix" evidence="15">
    <location>
        <begin position="526"/>
        <end position="535"/>
    </location>
</feature>
<feature type="strand" evidence="15">
    <location>
        <begin position="538"/>
        <end position="541"/>
    </location>
</feature>
<feature type="helix" evidence="15">
    <location>
        <begin position="560"/>
        <end position="566"/>
    </location>
</feature>
<feature type="turn" evidence="15">
    <location>
        <begin position="572"/>
        <end position="575"/>
    </location>
</feature>
<feature type="strand" evidence="15">
    <location>
        <begin position="576"/>
        <end position="583"/>
    </location>
</feature>
<feature type="strand" evidence="15">
    <location>
        <begin position="589"/>
        <end position="591"/>
    </location>
</feature>
<feature type="helix" evidence="15">
    <location>
        <begin position="593"/>
        <end position="605"/>
    </location>
</feature>
<feature type="helix" evidence="15">
    <location>
        <begin position="615"/>
        <end position="635"/>
    </location>
</feature>
<feature type="strand" evidence="15">
    <location>
        <begin position="638"/>
        <end position="640"/>
    </location>
</feature>
<feature type="helix" evidence="15">
    <location>
        <begin position="642"/>
        <end position="652"/>
    </location>
</feature>
<feature type="helix" evidence="15">
    <location>
        <begin position="657"/>
        <end position="659"/>
    </location>
</feature>
<feature type="helix" evidence="15">
    <location>
        <begin position="662"/>
        <end position="669"/>
    </location>
</feature>
<feature type="helix" evidence="15">
    <location>
        <begin position="671"/>
        <end position="684"/>
    </location>
</feature>
<feature type="helix" evidence="15">
    <location>
        <begin position="689"/>
        <end position="691"/>
    </location>
</feature>
<feature type="helix" evidence="15">
    <location>
        <begin position="695"/>
        <end position="702"/>
    </location>
</feature>
<feature type="helix" evidence="15">
    <location>
        <begin position="708"/>
        <end position="710"/>
    </location>
</feature>
<feature type="helix" evidence="15">
    <location>
        <begin position="711"/>
        <end position="715"/>
    </location>
</feature>
<evidence type="ECO:0000250" key="1"/>
<evidence type="ECO:0000250" key="2">
    <source>
        <dbReference type="UniProtKB" id="Q08426"/>
    </source>
</evidence>
<evidence type="ECO:0000250" key="3">
    <source>
        <dbReference type="UniProtKB" id="Q9DBM2"/>
    </source>
</evidence>
<evidence type="ECO:0000269" key="4">
    <source>
    </source>
</evidence>
<evidence type="ECO:0000269" key="5">
    <source>
    </source>
</evidence>
<evidence type="ECO:0000269" key="6">
    <source>
    </source>
</evidence>
<evidence type="ECO:0000269" key="7">
    <source>
    </source>
</evidence>
<evidence type="ECO:0000303" key="8">
    <source>
    </source>
</evidence>
<evidence type="ECO:0000305" key="9"/>
<evidence type="ECO:0000305" key="10">
    <source>
    </source>
</evidence>
<evidence type="ECO:0000305" key="11">
    <source>
    </source>
</evidence>
<evidence type="ECO:0000305" key="12">
    <source>
    </source>
</evidence>
<evidence type="ECO:0000305" key="13">
    <source>
    </source>
</evidence>
<evidence type="ECO:0000312" key="14">
    <source>
        <dbReference type="RGD" id="621441"/>
    </source>
</evidence>
<evidence type="ECO:0007829" key="15">
    <source>
        <dbReference type="PDB" id="1ZCJ"/>
    </source>
</evidence>
<evidence type="ECO:0007829" key="16">
    <source>
        <dbReference type="PDB" id="3ZW9"/>
    </source>
</evidence>
<evidence type="ECO:0007829" key="17">
    <source>
        <dbReference type="PDB" id="3ZWA"/>
    </source>
</evidence>
<evidence type="ECO:0007829" key="18">
    <source>
        <dbReference type="PDB" id="3ZWC"/>
    </source>
</evidence>
<evidence type="ECO:0007829" key="19">
    <source>
        <dbReference type="PDB" id="5MGB"/>
    </source>
</evidence>
<evidence type="ECO:0007829" key="20">
    <source>
        <dbReference type="PDB" id="5OMO"/>
    </source>
</evidence>
<gene>
    <name evidence="14" type="primary">Ehhadh</name>
    <name evidence="8" type="synonym">Mfe1</name>
</gene>
<name>ECHP_RAT</name>
<sequence>MAEYLRLPHSLAMIRLCNPPVNAVSPTVIREVRNGLQKAGSDHTVKAIVICGANGNFCAGADIHGFSAFTPGLALGSLVDEIQRYQKPVLAAIQGVALGGGLELALGCHYRIANAKARVGLPEVTLGILPGARGTQLLPRVVGVPVALDLITSGKYLSADEALRLGILDAVVKSDPVEEAIKFAQKIIDKPIEPRRIFNKPVPSLPNMDSVFAEAIAKVRKQYPGVLAPETCVRSIQASVKHPYEVGIKEEEKLFMYLRASGQAKALQYAFFAEKSANKWSTPSGASWKTASAQPVSSVGVLGLGTMGRGIAISFARVGISVVAVESDPKQLDAAKKIITFTLEKEASRAHQNGQASAKPKLRFSSSTKELSTVDLVVEAVFEDMNLKKKVFAELSALCKPGAFLCTNTSALNVDDIASSTDRPQLVIGTHFFSPAHVMRLLEVIPSRYSSPTTIATVMSLSKKIGKIGVVVGNCYGFVGNRMLAPYYNQGFFLLEEGSKPEDVDGVLEEFGFKMGPFRVSDLAGLDVGWKIRKGQGLTGPSLPPGTPVRKRGNSRYSPLGDMLCEAGRFGQKTGKGWYQYDKPLGRIHKPDPWLSTFLSQYREVHHIEQRTISKEEILERCLYSLINEAFRILEEGMAARPEHIDVIYLHGYGWPRHKGGPMFYAASVGLPTVLEKLQKYYRQNPDIPQLEPSDYLRRLVAQGSPPLKEWQSLAGPHGSKL</sequence>
<dbReference type="EC" id="4.2.1.17" evidence="5 7"/>
<dbReference type="EC" id="5.3.3.8" evidence="4 5 7"/>
<dbReference type="EC" id="1.1.1.35" evidence="7"/>
<dbReference type="EMBL" id="K03249">
    <property type="protein sequence ID" value="AAA41825.1"/>
    <property type="molecule type" value="mRNA"/>
</dbReference>
<dbReference type="EMBL" id="BC089777">
    <property type="protein sequence ID" value="AAH89777.1"/>
    <property type="molecule type" value="mRNA"/>
</dbReference>
<dbReference type="EMBL" id="J02748">
    <property type="protein sequence ID" value="AAA41826.1"/>
    <property type="molecule type" value="Genomic_DNA"/>
</dbReference>
<dbReference type="PIR" id="A23575">
    <property type="entry name" value="DWRTEP"/>
</dbReference>
<dbReference type="RefSeq" id="NP_598290.1">
    <property type="nucleotide sequence ID" value="NM_133606.3"/>
</dbReference>
<dbReference type="PDB" id="1ZCJ">
    <property type="method" value="X-ray"/>
    <property type="resolution" value="1.90 A"/>
    <property type="chains" value="A=260-722"/>
</dbReference>
<dbReference type="PDB" id="2X58">
    <property type="method" value="X-ray"/>
    <property type="resolution" value="2.80 A"/>
    <property type="chains" value="A/B=1-722"/>
</dbReference>
<dbReference type="PDB" id="3ZW8">
    <property type="method" value="X-ray"/>
    <property type="resolution" value="2.50 A"/>
    <property type="chains" value="A/B=1-722"/>
</dbReference>
<dbReference type="PDB" id="3ZW9">
    <property type="method" value="X-ray"/>
    <property type="resolution" value="2.90 A"/>
    <property type="chains" value="A/B=1-722"/>
</dbReference>
<dbReference type="PDB" id="3ZWA">
    <property type="method" value="X-ray"/>
    <property type="resolution" value="2.47 A"/>
    <property type="chains" value="A/B=1-722"/>
</dbReference>
<dbReference type="PDB" id="3ZWB">
    <property type="method" value="X-ray"/>
    <property type="resolution" value="3.10 A"/>
    <property type="chains" value="A/B=1-722"/>
</dbReference>
<dbReference type="PDB" id="3ZWC">
    <property type="method" value="X-ray"/>
    <property type="resolution" value="2.30 A"/>
    <property type="chains" value="A/B=1-722"/>
</dbReference>
<dbReference type="PDB" id="5MGB">
    <property type="method" value="X-ray"/>
    <property type="resolution" value="2.80 A"/>
    <property type="chains" value="A/B=1-722"/>
</dbReference>
<dbReference type="PDB" id="5OMO">
    <property type="method" value="X-ray"/>
    <property type="resolution" value="2.49 A"/>
    <property type="chains" value="A/B=1-722"/>
</dbReference>
<dbReference type="PDB" id="6Z5F">
    <property type="method" value="X-ray"/>
    <property type="resolution" value="2.25 A"/>
    <property type="chains" value="AAA/BBB=1-722"/>
</dbReference>
<dbReference type="PDB" id="6Z5O">
    <property type="method" value="X-ray"/>
    <property type="resolution" value="1.70 A"/>
    <property type="chains" value="AAA=1-722"/>
</dbReference>
<dbReference type="PDB" id="6Z5V">
    <property type="method" value="X-ray"/>
    <property type="resolution" value="2.33 A"/>
    <property type="chains" value="AAA/BBB=1-722"/>
</dbReference>
<dbReference type="PDB" id="6ZIB">
    <property type="method" value="X-ray"/>
    <property type="resolution" value="2.70 A"/>
    <property type="chains" value="AAA/BBB=1-722"/>
</dbReference>
<dbReference type="PDB" id="6ZIC">
    <property type="method" value="X-ray"/>
    <property type="resolution" value="2.20 A"/>
    <property type="chains" value="AAA/BBB=1-722"/>
</dbReference>
<dbReference type="PDBsum" id="1ZCJ"/>
<dbReference type="PDBsum" id="2X58"/>
<dbReference type="PDBsum" id="3ZW8"/>
<dbReference type="PDBsum" id="3ZW9"/>
<dbReference type="PDBsum" id="3ZWA"/>
<dbReference type="PDBsum" id="3ZWB"/>
<dbReference type="PDBsum" id="3ZWC"/>
<dbReference type="PDBsum" id="5MGB"/>
<dbReference type="PDBsum" id="5OMO"/>
<dbReference type="PDBsum" id="6Z5F"/>
<dbReference type="PDBsum" id="6Z5O"/>
<dbReference type="PDBsum" id="6Z5V"/>
<dbReference type="PDBsum" id="6ZIB"/>
<dbReference type="PDBsum" id="6ZIC"/>
<dbReference type="SMR" id="P07896"/>
<dbReference type="FunCoup" id="P07896">
    <property type="interactions" value="1339"/>
</dbReference>
<dbReference type="IntAct" id="P07896">
    <property type="interactions" value="7"/>
</dbReference>
<dbReference type="MINT" id="P07896"/>
<dbReference type="STRING" id="10116.ENSRNOP00000002410"/>
<dbReference type="ChEMBL" id="CHEMBL3232"/>
<dbReference type="SwissLipids" id="SLP:000001144"/>
<dbReference type="iPTMnet" id="P07896"/>
<dbReference type="PhosphoSitePlus" id="P07896"/>
<dbReference type="PaxDb" id="10116-ENSRNOP00000002410"/>
<dbReference type="Ensembl" id="ENSRNOT00000002410.5">
    <property type="protein sequence ID" value="ENSRNOP00000002410.2"/>
    <property type="gene ID" value="ENSRNOG00000001770.5"/>
</dbReference>
<dbReference type="GeneID" id="171142"/>
<dbReference type="KEGG" id="rno:171142"/>
<dbReference type="UCSC" id="RGD:621441">
    <property type="organism name" value="rat"/>
</dbReference>
<dbReference type="AGR" id="RGD:621441"/>
<dbReference type="CTD" id="1962"/>
<dbReference type="RGD" id="621441">
    <property type="gene designation" value="Ehhadh"/>
</dbReference>
<dbReference type="eggNOG" id="KOG1683">
    <property type="taxonomic scope" value="Eukaryota"/>
</dbReference>
<dbReference type="GeneTree" id="ENSGT00940000157516"/>
<dbReference type="HOGENOM" id="CLU_009834_16_3_1"/>
<dbReference type="InParanoid" id="P07896"/>
<dbReference type="OMA" id="YNGAAMG"/>
<dbReference type="OrthoDB" id="61620at9989"/>
<dbReference type="PhylomeDB" id="P07896"/>
<dbReference type="TreeFam" id="TF316708"/>
<dbReference type="BRENDA" id="4.2.1.17">
    <property type="organism ID" value="5301"/>
</dbReference>
<dbReference type="Reactome" id="R-RNO-390247">
    <property type="pathway name" value="Beta-oxidation of very long chain fatty acids"/>
</dbReference>
<dbReference type="Reactome" id="R-RNO-9033241">
    <property type="pathway name" value="Peroxisomal protein import"/>
</dbReference>
<dbReference type="SABIO-RK" id="P07896"/>
<dbReference type="UniPathway" id="UPA00659"/>
<dbReference type="EvolutionaryTrace" id="P07896"/>
<dbReference type="PRO" id="PR:P07896"/>
<dbReference type="Proteomes" id="UP000002494">
    <property type="component" value="Chromosome 11"/>
</dbReference>
<dbReference type="Bgee" id="ENSRNOG00000001770">
    <property type="expression patterns" value="Expressed in liver and 17 other cell types or tissues"/>
</dbReference>
<dbReference type="GO" id="GO:0005829">
    <property type="term" value="C:cytosol"/>
    <property type="evidence" value="ECO:0000314"/>
    <property type="project" value="UniProtKB"/>
</dbReference>
<dbReference type="GO" id="GO:0005782">
    <property type="term" value="C:peroxisomal matrix"/>
    <property type="evidence" value="ECO:0007669"/>
    <property type="project" value="Ensembl"/>
</dbReference>
<dbReference type="GO" id="GO:0005777">
    <property type="term" value="C:peroxisome"/>
    <property type="evidence" value="ECO:0000314"/>
    <property type="project" value="UniProtKB"/>
</dbReference>
<dbReference type="GO" id="GO:0018812">
    <property type="term" value="F:3-hydroxyacyl-CoA dehydratase activity"/>
    <property type="evidence" value="ECO:0007669"/>
    <property type="project" value="Ensembl"/>
</dbReference>
<dbReference type="GO" id="GO:0003857">
    <property type="term" value="F:3-hydroxyacyl-CoA dehydrogenase activity"/>
    <property type="evidence" value="ECO:0000314"/>
    <property type="project" value="UniProtKB"/>
</dbReference>
<dbReference type="GO" id="GO:0004165">
    <property type="term" value="F:delta(3)-delta(2)-enoyl-CoA isomerase activity"/>
    <property type="evidence" value="ECO:0000314"/>
    <property type="project" value="UniProtKB"/>
</dbReference>
<dbReference type="GO" id="GO:0004300">
    <property type="term" value="F:enoyl-CoA hydratase activity"/>
    <property type="evidence" value="ECO:0000314"/>
    <property type="project" value="UniProtKB"/>
</dbReference>
<dbReference type="GO" id="GO:0019899">
    <property type="term" value="F:enzyme binding"/>
    <property type="evidence" value="ECO:0000353"/>
    <property type="project" value="UniProtKB"/>
</dbReference>
<dbReference type="GO" id="GO:0016863">
    <property type="term" value="F:intramolecular oxidoreductase activity, transposing C=C bonds"/>
    <property type="evidence" value="ECO:0000314"/>
    <property type="project" value="UniProtKB"/>
</dbReference>
<dbReference type="GO" id="GO:0016509">
    <property type="term" value="F:long-chain-3-hydroxyacyl-CoA dehydrogenase activity"/>
    <property type="evidence" value="ECO:0000250"/>
    <property type="project" value="UniProtKB"/>
</dbReference>
<dbReference type="GO" id="GO:0070403">
    <property type="term" value="F:NAD+ binding"/>
    <property type="evidence" value="ECO:0007669"/>
    <property type="project" value="InterPro"/>
</dbReference>
<dbReference type="GO" id="GO:0036109">
    <property type="term" value="P:alpha-linolenic acid metabolic process"/>
    <property type="evidence" value="ECO:0007669"/>
    <property type="project" value="Ensembl"/>
</dbReference>
<dbReference type="GO" id="GO:0006635">
    <property type="term" value="P:fatty acid beta-oxidation"/>
    <property type="evidence" value="ECO:0000314"/>
    <property type="project" value="UniProtKB"/>
</dbReference>
<dbReference type="GO" id="GO:0033540">
    <property type="term" value="P:fatty acid beta-oxidation using acyl-CoA oxidase"/>
    <property type="evidence" value="ECO:0007669"/>
    <property type="project" value="Ensembl"/>
</dbReference>
<dbReference type="GO" id="GO:1901570">
    <property type="term" value="P:fatty acid derivative biosynthetic process"/>
    <property type="evidence" value="ECO:0007669"/>
    <property type="project" value="Ensembl"/>
</dbReference>
<dbReference type="GO" id="GO:0042759">
    <property type="term" value="P:long-chain fatty acid biosynthetic process"/>
    <property type="evidence" value="ECO:0007669"/>
    <property type="project" value="Ensembl"/>
</dbReference>
<dbReference type="GO" id="GO:0006636">
    <property type="term" value="P:unsaturated fatty acid biosynthetic process"/>
    <property type="evidence" value="ECO:0007669"/>
    <property type="project" value="Ensembl"/>
</dbReference>
<dbReference type="CDD" id="cd06558">
    <property type="entry name" value="crotonase-like"/>
    <property type="match status" value="1"/>
</dbReference>
<dbReference type="FunFam" id="1.10.1040.50:FF:000006">
    <property type="entry name" value="Peroxisomal bifunctional enzyme"/>
    <property type="match status" value="1"/>
</dbReference>
<dbReference type="FunFam" id="3.90.226.10:FF:000052">
    <property type="entry name" value="Peroxisomal bifunctional enzyme"/>
    <property type="match status" value="1"/>
</dbReference>
<dbReference type="FunFam" id="3.40.50.720:FF:000296">
    <property type="entry name" value="peroxisomal bifunctional enzyme isoform X1"/>
    <property type="match status" value="1"/>
</dbReference>
<dbReference type="Gene3D" id="1.10.1040.50">
    <property type="match status" value="1"/>
</dbReference>
<dbReference type="Gene3D" id="3.90.226.10">
    <property type="entry name" value="2-enoyl-CoA Hydratase, Chain A, domain 1"/>
    <property type="match status" value="1"/>
</dbReference>
<dbReference type="Gene3D" id="3.40.50.720">
    <property type="entry name" value="NAD(P)-binding Rossmann-like Domain"/>
    <property type="match status" value="1"/>
</dbReference>
<dbReference type="InterPro" id="IPR006180">
    <property type="entry name" value="3-OHacyl-CoA_DH_CS"/>
</dbReference>
<dbReference type="InterPro" id="IPR006176">
    <property type="entry name" value="3-OHacyl-CoA_DH_NAD-bd"/>
</dbReference>
<dbReference type="InterPro" id="IPR006108">
    <property type="entry name" value="3HC_DH_C"/>
</dbReference>
<dbReference type="InterPro" id="IPR008927">
    <property type="entry name" value="6-PGluconate_DH-like_C_sf"/>
</dbReference>
<dbReference type="InterPro" id="IPR029045">
    <property type="entry name" value="ClpP/crotonase-like_dom_sf"/>
</dbReference>
<dbReference type="InterPro" id="IPR018376">
    <property type="entry name" value="Enoyl-CoA_hyd/isom_CS"/>
</dbReference>
<dbReference type="InterPro" id="IPR001753">
    <property type="entry name" value="Enoyl-CoA_hydra/iso"/>
</dbReference>
<dbReference type="InterPro" id="IPR036291">
    <property type="entry name" value="NAD(P)-bd_dom_sf"/>
</dbReference>
<dbReference type="PANTHER" id="PTHR23309">
    <property type="entry name" value="3-HYDROXYACYL-COA DEHYROGENASE"/>
    <property type="match status" value="1"/>
</dbReference>
<dbReference type="PANTHER" id="PTHR23309:SF49">
    <property type="entry name" value="PEROXISOMAL BIFUNCTIONAL ENZYME"/>
    <property type="match status" value="1"/>
</dbReference>
<dbReference type="Pfam" id="PF00725">
    <property type="entry name" value="3HCDH"/>
    <property type="match status" value="2"/>
</dbReference>
<dbReference type="Pfam" id="PF02737">
    <property type="entry name" value="3HCDH_N"/>
    <property type="match status" value="1"/>
</dbReference>
<dbReference type="Pfam" id="PF00378">
    <property type="entry name" value="ECH_1"/>
    <property type="match status" value="1"/>
</dbReference>
<dbReference type="SUPFAM" id="SSF48179">
    <property type="entry name" value="6-phosphogluconate dehydrogenase C-terminal domain-like"/>
    <property type="match status" value="2"/>
</dbReference>
<dbReference type="SUPFAM" id="SSF52096">
    <property type="entry name" value="ClpP/crotonase"/>
    <property type="match status" value="1"/>
</dbReference>
<dbReference type="SUPFAM" id="SSF51735">
    <property type="entry name" value="NAD(P)-binding Rossmann-fold domains"/>
    <property type="match status" value="1"/>
</dbReference>
<dbReference type="PROSITE" id="PS00067">
    <property type="entry name" value="3HCDH"/>
    <property type="match status" value="1"/>
</dbReference>
<dbReference type="PROSITE" id="PS00166">
    <property type="entry name" value="ENOYL_COA_HYDRATASE"/>
    <property type="match status" value="1"/>
</dbReference>
<keyword id="KW-0002">3D-structure</keyword>
<keyword id="KW-0007">Acetylation</keyword>
<keyword id="KW-0903">Direct protein sequencing</keyword>
<keyword id="KW-0276">Fatty acid metabolism</keyword>
<keyword id="KW-0413">Isomerase</keyword>
<keyword id="KW-0443">Lipid metabolism</keyword>
<keyword id="KW-0456">Lyase</keyword>
<keyword id="KW-0511">Multifunctional enzyme</keyword>
<keyword id="KW-0520">NAD</keyword>
<keyword id="KW-0560">Oxidoreductase</keyword>
<keyword id="KW-0576">Peroxisome</keyword>
<keyword id="KW-0597">Phosphoprotein</keyword>
<keyword id="KW-1185">Reference proteome</keyword>
<accession>P07896</accession>
<accession>Q5EBD2</accession>
<reference key="1">
    <citation type="journal article" date="1985" name="J. Biol. Chem.">
        <title>Molecular cloning and nucleotide sequence of the cDNA for rat peroxisomal enoyl-CoA: hydratase-3-hydroxyacyl-CoA dehydrogenase bifunctional enzyme.</title>
        <authorList>
            <person name="Osumi T."/>
            <person name="Ishii N."/>
            <person name="Hijikata M."/>
            <person name="Kamijo K."/>
            <person name="Ozasa H."/>
            <person name="Furuta S."/>
            <person name="Miyazawa S."/>
            <person name="Kondo K."/>
            <person name="Inoue K."/>
            <person name="Kagamiyama H."/>
            <person name="Hashimoto T."/>
        </authorList>
    </citation>
    <scope>NUCLEOTIDE SEQUENCE [MRNA]</scope>
</reference>
<reference key="2">
    <citation type="journal article" date="2004" name="Genome Res.">
        <title>The status, quality, and expansion of the NIH full-length cDNA project: the Mammalian Gene Collection (MGC).</title>
        <authorList>
            <consortium name="The MGC Project Team"/>
        </authorList>
    </citation>
    <scope>NUCLEOTIDE SEQUENCE [LARGE SCALE MRNA]</scope>
    <source>
        <tissue>Liver</tissue>
    </source>
</reference>
<reference key="3">
    <citation type="journal article" date="1987" name="J. Biol. Chem.">
        <title>Structural organization of the gene for rat enoyl-CoA hydratase:3-hydroxyacyl-CoA dehydrogenase bifunctional enzyme.</title>
        <authorList>
            <person name="Ishii N."/>
            <person name="Hijikata M."/>
            <person name="Osumi T."/>
            <person name="Hashimoto T."/>
        </authorList>
    </citation>
    <scope>NUCLEOTIDE SEQUENCE [GENOMIC DNA] OF 1-24</scope>
</reference>
<reference key="4">
    <citation type="journal article" date="1996" name="Eur. J. Biochem.">
        <title>Further characterization of the peroxisomal 3-hydroxyacyl-CoA dehydrogenases from rat liver. Relationship between the different dehydrogenases and evidence that fatty acids and the C27 bile acids di- and tri-hydroxycoprostanic acids are metabolized by separate multifunctional proteins.</title>
        <authorList>
            <person name="Dieuaide-Noubhani M."/>
            <person name="Novikov D."/>
            <person name="Baumgart E."/>
            <person name="Vanhooren J.C.T."/>
            <person name="Fransen M."/>
            <person name="Goethals M."/>
            <person name="Vandekerckhove J."/>
            <person name="Van Veldhoven P.P."/>
            <person name="Mannaerts G.P."/>
        </authorList>
    </citation>
    <scope>PROTEIN SEQUENCE OF 260-265; 294-302; 520-531 AND 710-719</scope>
</reference>
<reference key="5">
    <citation type="journal article" date="1990" name="J. Biol. Chem.">
        <title>Peroxisomal bifunctional protein from rat liver is a trifunctional enzyme possessing 2-enoyl-CoA hydratase, 3-hydroxyacyl-CoA dehydrogenase, and delta 3, delta 2-enoyl-CoA isomerase activities.</title>
        <authorList>
            <person name="Palosaari P.M."/>
            <person name="Hiltunen J.K."/>
        </authorList>
    </citation>
    <scope>FUNCTION AS AN ISOMERASE</scope>
    <scope>CATALYTIC ACTIVITY</scope>
</reference>
<reference key="6">
    <citation type="journal article" date="2002" name="Biochem. J.">
        <title>Organization of the multifunctional enzyme type 1: interaction between N- and C-terminal domains is required for the hydratase-1/isomerase activity.</title>
        <authorList>
            <person name="Kiema T.R."/>
            <person name="Taskinen J.P."/>
            <person name="Pirilae P.L."/>
            <person name="Koivuranta K.T."/>
            <person name="Wierenga R.K."/>
            <person name="Hiltunen J.K."/>
        </authorList>
    </citation>
    <scope>FUNCTION</scope>
    <scope>CATALYTIC ACTIVITY</scope>
</reference>
<reference key="7">
    <citation type="journal article" date="2002" name="J. Biol. Chem.">
        <title>Functional characterization of delta3,delta2-enoyl-CoA isomerases from rat liver.</title>
        <authorList>
            <person name="Zhang D."/>
            <person name="Yu W."/>
            <person name="Geisbrecht B.V."/>
            <person name="Gould S.J."/>
            <person name="Sprecher H."/>
            <person name="Schulz H."/>
        </authorList>
    </citation>
    <scope>FUNCTION</scope>
    <scope>SUBCELLULAR LOCATION</scope>
    <scope>TISSUE SPECIFICITY</scope>
    <scope>CATALYTIC ACTIVITY</scope>
</reference>
<reference key="8">
    <citation type="journal article" date="2013" name="FEBS J.">
        <title>The isomerase and hydratase reaction mechanism of the crotonase active site of the multifunctional enzyme (type-1), as deduced from structures of complexes with 3S-hydroxy-acyl-CoA.</title>
        <authorList>
            <person name="Kasaragod P."/>
            <person name="Schmitz W."/>
            <person name="Hiltunen J.K."/>
            <person name="Wierenga R.K."/>
        </authorList>
    </citation>
    <scope>FUNCTION</scope>
    <scope>CATALYTIC ACTIVITY</scope>
</reference>
<reference key="9">
    <citation type="journal article" date="2006" name="J. Mol. Biol.">
        <title>Structural studies of MFE-1: the 1.9 A crystal structure of the dehydrogenase part of rat peroxisomal MFE-1.</title>
        <authorList>
            <person name="Taskinen J.P."/>
            <person name="Kiema T.R."/>
            <person name="Hiltunen J.K."/>
            <person name="Wierenga R.K."/>
        </authorList>
    </citation>
    <scope>X-RAY CRYSTALLOGRAPHY (1.9 ANGSTROMS) OF 260-722</scope>
    <scope>SUBUNIT</scope>
</reference>
<protein>
    <recommendedName>
        <fullName evidence="9">Peroxisomal bifunctional enzyme</fullName>
        <shortName>PBE</shortName>
        <shortName>PBFE</shortName>
    </recommendedName>
    <alternativeName>
        <fullName evidence="8">Multifunctional enzyme 1</fullName>
        <shortName>MFE1</shortName>
    </alternativeName>
    <alternativeName>
        <fullName>Multifunctional protein 1</fullName>
        <shortName>MFP1</shortName>
    </alternativeName>
    <domain>
        <recommendedName>
            <fullName>Enoyl-CoA hydratase/3,2-trans-enoyl-CoA isomerase</fullName>
            <ecNumber evidence="5 7">4.2.1.17</ecNumber>
            <ecNumber evidence="4 5 7">5.3.3.8</ecNumber>
        </recommendedName>
    </domain>
    <domain>
        <recommendedName>
            <fullName>3-hydroxyacyl-CoA dehydrogenase</fullName>
            <ecNumber evidence="7">1.1.1.35</ecNumber>
        </recommendedName>
    </domain>
</protein>
<organism>
    <name type="scientific">Rattus norvegicus</name>
    <name type="common">Rat</name>
    <dbReference type="NCBI Taxonomy" id="10116"/>
    <lineage>
        <taxon>Eukaryota</taxon>
        <taxon>Metazoa</taxon>
        <taxon>Chordata</taxon>
        <taxon>Craniata</taxon>
        <taxon>Vertebrata</taxon>
        <taxon>Euteleostomi</taxon>
        <taxon>Mammalia</taxon>
        <taxon>Eutheria</taxon>
        <taxon>Euarchontoglires</taxon>
        <taxon>Glires</taxon>
        <taxon>Rodentia</taxon>
        <taxon>Myomorpha</taxon>
        <taxon>Muroidea</taxon>
        <taxon>Muridae</taxon>
        <taxon>Murinae</taxon>
        <taxon>Rattus</taxon>
    </lineage>
</organism>